<proteinExistence type="inferred from homology"/>
<dbReference type="EMBL" id="AP008957">
    <property type="protein sequence ID" value="BAH32560.1"/>
    <property type="molecule type" value="Genomic_DNA"/>
</dbReference>
<dbReference type="RefSeq" id="WP_003940826.1">
    <property type="nucleotide sequence ID" value="NC_012490.1"/>
</dbReference>
<dbReference type="SMR" id="C0ZW25"/>
<dbReference type="GeneID" id="93803304"/>
<dbReference type="KEGG" id="rer:RER_18520"/>
<dbReference type="eggNOG" id="COG0087">
    <property type="taxonomic scope" value="Bacteria"/>
</dbReference>
<dbReference type="HOGENOM" id="CLU_044142_4_1_11"/>
<dbReference type="Proteomes" id="UP000002204">
    <property type="component" value="Chromosome"/>
</dbReference>
<dbReference type="GO" id="GO:0022625">
    <property type="term" value="C:cytosolic large ribosomal subunit"/>
    <property type="evidence" value="ECO:0007669"/>
    <property type="project" value="TreeGrafter"/>
</dbReference>
<dbReference type="GO" id="GO:0019843">
    <property type="term" value="F:rRNA binding"/>
    <property type="evidence" value="ECO:0007669"/>
    <property type="project" value="UniProtKB-UniRule"/>
</dbReference>
<dbReference type="GO" id="GO:0003735">
    <property type="term" value="F:structural constituent of ribosome"/>
    <property type="evidence" value="ECO:0007669"/>
    <property type="project" value="InterPro"/>
</dbReference>
<dbReference type="GO" id="GO:0006412">
    <property type="term" value="P:translation"/>
    <property type="evidence" value="ECO:0007669"/>
    <property type="project" value="UniProtKB-UniRule"/>
</dbReference>
<dbReference type="FunFam" id="2.40.30.10:FF:000004">
    <property type="entry name" value="50S ribosomal protein L3"/>
    <property type="match status" value="1"/>
</dbReference>
<dbReference type="FunFam" id="3.30.160.810:FF:000003">
    <property type="entry name" value="50S ribosomal protein L3"/>
    <property type="match status" value="1"/>
</dbReference>
<dbReference type="Gene3D" id="3.30.160.810">
    <property type="match status" value="1"/>
</dbReference>
<dbReference type="Gene3D" id="2.40.30.10">
    <property type="entry name" value="Translation factors"/>
    <property type="match status" value="1"/>
</dbReference>
<dbReference type="HAMAP" id="MF_01325_B">
    <property type="entry name" value="Ribosomal_uL3_B"/>
    <property type="match status" value="1"/>
</dbReference>
<dbReference type="InterPro" id="IPR000597">
    <property type="entry name" value="Ribosomal_uL3"/>
</dbReference>
<dbReference type="InterPro" id="IPR019927">
    <property type="entry name" value="Ribosomal_uL3_bac/org-type"/>
</dbReference>
<dbReference type="InterPro" id="IPR019926">
    <property type="entry name" value="Ribosomal_uL3_CS"/>
</dbReference>
<dbReference type="InterPro" id="IPR009000">
    <property type="entry name" value="Transl_B-barrel_sf"/>
</dbReference>
<dbReference type="NCBIfam" id="TIGR03625">
    <property type="entry name" value="L3_bact"/>
    <property type="match status" value="1"/>
</dbReference>
<dbReference type="PANTHER" id="PTHR11229">
    <property type="entry name" value="50S RIBOSOMAL PROTEIN L3"/>
    <property type="match status" value="1"/>
</dbReference>
<dbReference type="PANTHER" id="PTHR11229:SF16">
    <property type="entry name" value="LARGE RIBOSOMAL SUBUNIT PROTEIN UL3C"/>
    <property type="match status" value="1"/>
</dbReference>
<dbReference type="Pfam" id="PF00297">
    <property type="entry name" value="Ribosomal_L3"/>
    <property type="match status" value="1"/>
</dbReference>
<dbReference type="SUPFAM" id="SSF50447">
    <property type="entry name" value="Translation proteins"/>
    <property type="match status" value="1"/>
</dbReference>
<dbReference type="PROSITE" id="PS00474">
    <property type="entry name" value="RIBOSOMAL_L3"/>
    <property type="match status" value="1"/>
</dbReference>
<feature type="chain" id="PRO_1000214517" description="Large ribosomal subunit protein uL3">
    <location>
        <begin position="1"/>
        <end position="218"/>
    </location>
</feature>
<feature type="region of interest" description="Disordered" evidence="2">
    <location>
        <begin position="132"/>
        <end position="152"/>
    </location>
</feature>
<reference key="1">
    <citation type="submission" date="2005-03" db="EMBL/GenBank/DDBJ databases">
        <title>Comparison of the complete genome sequences of Rhodococcus erythropolis PR4 and Rhodococcus opacus B4.</title>
        <authorList>
            <person name="Takarada H."/>
            <person name="Sekine M."/>
            <person name="Hosoyama A."/>
            <person name="Yamada R."/>
            <person name="Fujisawa T."/>
            <person name="Omata S."/>
            <person name="Shimizu A."/>
            <person name="Tsukatani N."/>
            <person name="Tanikawa S."/>
            <person name="Fujita N."/>
            <person name="Harayama S."/>
        </authorList>
    </citation>
    <scope>NUCLEOTIDE SEQUENCE [LARGE SCALE GENOMIC DNA]</scope>
    <source>
        <strain>PR4 / NBRC 100887</strain>
    </source>
</reference>
<gene>
    <name evidence="1" type="primary">rplC</name>
    <name type="ordered locus">RER_18520</name>
</gene>
<sequence length="218" mass="23045">MTDTKIKGILGTKLGMTQVFDENNRVVPVTVVKAGPNVVTQIRTEERDGYSAVQLAFGAIDPRKVNKPTSGQFTKAGVTPRRHVVELRVADTSDYEVGQELTAEVFEDGAYVDVTGTSKGKGFAGTMKRHGFKGQGASHGTQAVHRRPGSIGGCATPGRVFKGMRMSGRMGSDRITTQNLSVHKVDAENGLLLIKGAIPGRKGGLVIVKSAVKGGARA</sequence>
<accession>C0ZW25</accession>
<organism>
    <name type="scientific">Rhodococcus erythropolis (strain PR4 / NBRC 100887)</name>
    <dbReference type="NCBI Taxonomy" id="234621"/>
    <lineage>
        <taxon>Bacteria</taxon>
        <taxon>Bacillati</taxon>
        <taxon>Actinomycetota</taxon>
        <taxon>Actinomycetes</taxon>
        <taxon>Mycobacteriales</taxon>
        <taxon>Nocardiaceae</taxon>
        <taxon>Rhodococcus</taxon>
        <taxon>Rhodococcus erythropolis group</taxon>
    </lineage>
</organism>
<name>RL3_RHOE4</name>
<keyword id="KW-0687">Ribonucleoprotein</keyword>
<keyword id="KW-0689">Ribosomal protein</keyword>
<keyword id="KW-0694">RNA-binding</keyword>
<keyword id="KW-0699">rRNA-binding</keyword>
<evidence type="ECO:0000255" key="1">
    <source>
        <dbReference type="HAMAP-Rule" id="MF_01325"/>
    </source>
</evidence>
<evidence type="ECO:0000256" key="2">
    <source>
        <dbReference type="SAM" id="MobiDB-lite"/>
    </source>
</evidence>
<evidence type="ECO:0000305" key="3"/>
<protein>
    <recommendedName>
        <fullName evidence="1">Large ribosomal subunit protein uL3</fullName>
    </recommendedName>
    <alternativeName>
        <fullName evidence="3">50S ribosomal protein L3</fullName>
    </alternativeName>
</protein>
<comment type="function">
    <text evidence="1">One of the primary rRNA binding proteins, it binds directly near the 3'-end of the 23S rRNA, where it nucleates assembly of the 50S subunit.</text>
</comment>
<comment type="subunit">
    <text evidence="1">Part of the 50S ribosomal subunit. Forms a cluster with proteins L14 and L19.</text>
</comment>
<comment type="similarity">
    <text evidence="1">Belongs to the universal ribosomal protein uL3 family.</text>
</comment>